<protein>
    <recommendedName>
        <fullName evidence="1">Glucose-6-phosphate isomerase</fullName>
        <shortName evidence="1">GPI</shortName>
        <ecNumber evidence="1">5.3.1.9</ecNumber>
    </recommendedName>
    <alternativeName>
        <fullName evidence="1">Phosphoglucose isomerase</fullName>
        <shortName evidence="1">PGI</shortName>
    </alternativeName>
    <alternativeName>
        <fullName evidence="1">Phosphohexose isomerase</fullName>
        <shortName evidence="1">PHI</shortName>
    </alternativeName>
</protein>
<proteinExistence type="inferred from homology"/>
<dbReference type="EC" id="5.3.1.9" evidence="1"/>
<dbReference type="EMBL" id="CP001078">
    <property type="protein sequence ID" value="ACD53102.1"/>
    <property type="molecule type" value="Genomic_DNA"/>
</dbReference>
<dbReference type="RefSeq" id="WP_003373738.1">
    <property type="nucleotide sequence ID" value="NC_010723.1"/>
</dbReference>
<dbReference type="SMR" id="B2UZ17"/>
<dbReference type="KEGG" id="cbt:CLH_0389"/>
<dbReference type="HOGENOM" id="CLU_037303_0_1_9"/>
<dbReference type="UniPathway" id="UPA00109">
    <property type="reaction ID" value="UER00181"/>
</dbReference>
<dbReference type="UniPathway" id="UPA00138"/>
<dbReference type="GO" id="GO:0005829">
    <property type="term" value="C:cytosol"/>
    <property type="evidence" value="ECO:0007669"/>
    <property type="project" value="TreeGrafter"/>
</dbReference>
<dbReference type="GO" id="GO:0097367">
    <property type="term" value="F:carbohydrate derivative binding"/>
    <property type="evidence" value="ECO:0007669"/>
    <property type="project" value="InterPro"/>
</dbReference>
<dbReference type="GO" id="GO:0004347">
    <property type="term" value="F:glucose-6-phosphate isomerase activity"/>
    <property type="evidence" value="ECO:0007669"/>
    <property type="project" value="UniProtKB-UniRule"/>
</dbReference>
<dbReference type="GO" id="GO:0048029">
    <property type="term" value="F:monosaccharide binding"/>
    <property type="evidence" value="ECO:0007669"/>
    <property type="project" value="TreeGrafter"/>
</dbReference>
<dbReference type="GO" id="GO:0006094">
    <property type="term" value="P:gluconeogenesis"/>
    <property type="evidence" value="ECO:0007669"/>
    <property type="project" value="UniProtKB-UniRule"/>
</dbReference>
<dbReference type="GO" id="GO:0051156">
    <property type="term" value="P:glucose 6-phosphate metabolic process"/>
    <property type="evidence" value="ECO:0007669"/>
    <property type="project" value="TreeGrafter"/>
</dbReference>
<dbReference type="GO" id="GO:0006096">
    <property type="term" value="P:glycolytic process"/>
    <property type="evidence" value="ECO:0007669"/>
    <property type="project" value="UniProtKB-UniRule"/>
</dbReference>
<dbReference type="CDD" id="cd05015">
    <property type="entry name" value="SIS_PGI_1"/>
    <property type="match status" value="1"/>
</dbReference>
<dbReference type="CDD" id="cd05016">
    <property type="entry name" value="SIS_PGI_2"/>
    <property type="match status" value="1"/>
</dbReference>
<dbReference type="FunFam" id="3.40.50.10490:FF:000015">
    <property type="entry name" value="Glucose-6-phosphate isomerase"/>
    <property type="match status" value="1"/>
</dbReference>
<dbReference type="FunFam" id="3.40.50.10490:FF:000016">
    <property type="entry name" value="Glucose-6-phosphate isomerase"/>
    <property type="match status" value="1"/>
</dbReference>
<dbReference type="Gene3D" id="3.40.50.10490">
    <property type="entry name" value="Glucose-6-phosphate isomerase like protein, domain 1"/>
    <property type="match status" value="2"/>
</dbReference>
<dbReference type="HAMAP" id="MF_00473">
    <property type="entry name" value="G6P_isomerase"/>
    <property type="match status" value="1"/>
</dbReference>
<dbReference type="InterPro" id="IPR001672">
    <property type="entry name" value="G6P_Isomerase"/>
</dbReference>
<dbReference type="InterPro" id="IPR018189">
    <property type="entry name" value="Phosphoglucose_isomerase_CS"/>
</dbReference>
<dbReference type="InterPro" id="IPR046348">
    <property type="entry name" value="SIS_dom_sf"/>
</dbReference>
<dbReference type="InterPro" id="IPR035476">
    <property type="entry name" value="SIS_PGI_1"/>
</dbReference>
<dbReference type="InterPro" id="IPR035482">
    <property type="entry name" value="SIS_PGI_2"/>
</dbReference>
<dbReference type="NCBIfam" id="NF010697">
    <property type="entry name" value="PRK14097.1"/>
    <property type="match status" value="1"/>
</dbReference>
<dbReference type="PANTHER" id="PTHR11469">
    <property type="entry name" value="GLUCOSE-6-PHOSPHATE ISOMERASE"/>
    <property type="match status" value="1"/>
</dbReference>
<dbReference type="PANTHER" id="PTHR11469:SF1">
    <property type="entry name" value="GLUCOSE-6-PHOSPHATE ISOMERASE"/>
    <property type="match status" value="1"/>
</dbReference>
<dbReference type="Pfam" id="PF00342">
    <property type="entry name" value="PGI"/>
    <property type="match status" value="1"/>
</dbReference>
<dbReference type="PRINTS" id="PR00662">
    <property type="entry name" value="G6PISOMERASE"/>
</dbReference>
<dbReference type="SUPFAM" id="SSF53697">
    <property type="entry name" value="SIS domain"/>
    <property type="match status" value="1"/>
</dbReference>
<dbReference type="PROSITE" id="PS00765">
    <property type="entry name" value="P_GLUCOSE_ISOMERASE_1"/>
    <property type="match status" value="1"/>
</dbReference>
<dbReference type="PROSITE" id="PS00174">
    <property type="entry name" value="P_GLUCOSE_ISOMERASE_2"/>
    <property type="match status" value="1"/>
</dbReference>
<dbReference type="PROSITE" id="PS51463">
    <property type="entry name" value="P_GLUCOSE_ISOMERASE_3"/>
    <property type="match status" value="1"/>
</dbReference>
<accession>B2UZ17</accession>
<evidence type="ECO:0000255" key="1">
    <source>
        <dbReference type="HAMAP-Rule" id="MF_00473"/>
    </source>
</evidence>
<comment type="function">
    <text evidence="1">Catalyzes the reversible isomerization of glucose-6-phosphate to fructose-6-phosphate.</text>
</comment>
<comment type="catalytic activity">
    <reaction evidence="1">
        <text>alpha-D-glucose 6-phosphate = beta-D-fructose 6-phosphate</text>
        <dbReference type="Rhea" id="RHEA:11816"/>
        <dbReference type="ChEBI" id="CHEBI:57634"/>
        <dbReference type="ChEBI" id="CHEBI:58225"/>
        <dbReference type="EC" id="5.3.1.9"/>
    </reaction>
</comment>
<comment type="pathway">
    <text evidence="1">Carbohydrate biosynthesis; gluconeogenesis.</text>
</comment>
<comment type="pathway">
    <text evidence="1">Carbohydrate degradation; glycolysis; D-glyceraldehyde 3-phosphate and glycerone phosphate from D-glucose: step 2/4.</text>
</comment>
<comment type="subcellular location">
    <subcellularLocation>
        <location evidence="1">Cytoplasm</location>
    </subcellularLocation>
</comment>
<comment type="similarity">
    <text evidence="1">Belongs to the GPI family.</text>
</comment>
<gene>
    <name evidence="1" type="primary">pgi</name>
    <name type="ordered locus">CLH_0389</name>
</gene>
<name>G6PI_CLOBA</name>
<organism>
    <name type="scientific">Clostridium botulinum (strain Alaska E43 / Type E3)</name>
    <dbReference type="NCBI Taxonomy" id="508767"/>
    <lineage>
        <taxon>Bacteria</taxon>
        <taxon>Bacillati</taxon>
        <taxon>Bacillota</taxon>
        <taxon>Clostridia</taxon>
        <taxon>Eubacteriales</taxon>
        <taxon>Clostridiaceae</taxon>
        <taxon>Clostridium</taxon>
    </lineage>
</organism>
<feature type="chain" id="PRO_1000125707" description="Glucose-6-phosphate isomerase">
    <location>
        <begin position="1"/>
        <end position="449"/>
    </location>
</feature>
<feature type="active site" description="Proton donor" evidence="1">
    <location>
        <position position="291"/>
    </location>
</feature>
<feature type="active site" evidence="1">
    <location>
        <position position="312"/>
    </location>
</feature>
<feature type="active site" evidence="1">
    <location>
        <position position="426"/>
    </location>
</feature>
<sequence length="449" mass="50384">MKKGLTLDLSKTQAFVKDYELDYMEGMVKDSHDRLHSKTGQGNDFLGWIDLPVDYDKEEFARIKKAAEKIQSDSDVLVVIGIGGSYLGARAAIEMLTSNFHNVLDDNKRKVPKIFYAGNNISSTYMAELLEAIDGKDVSVNVISKSGTTTEPAIAFRIFKSYLEKKYGVEEARKRIYATTDKSRGALKSLADAEGYETFVIPDDVGGRFTVLTPVGLLPIAVAGINIDEMMQGAADARESYSNPSLKENDCYKYAVTRNALYNKGKEIEVLVNYEPCIHYFNEWWKQLYGESEGKDKKGLFPAAVDFSTDLHSMGQYIQDGRRNLFETVINVEKARKEITIEFSEGDLDGLNFLTGKTMDFVNNKAFQGTLLAHNDGEVPNMVLNVPELSPYYFGHMVYFFEKACGISGYLLGINPFDQPGVEAYKKNMFALLGKPGYEDMKDELEKRL</sequence>
<keyword id="KW-0963">Cytoplasm</keyword>
<keyword id="KW-0312">Gluconeogenesis</keyword>
<keyword id="KW-0324">Glycolysis</keyword>
<keyword id="KW-0413">Isomerase</keyword>
<reference key="1">
    <citation type="submission" date="2008-05" db="EMBL/GenBank/DDBJ databases">
        <title>Complete genome sequence of Clostridium botulinum E3 str. Alaska E43.</title>
        <authorList>
            <person name="Brinkac L.M."/>
            <person name="Brown J.L."/>
            <person name="Bruce D."/>
            <person name="Detter C."/>
            <person name="Munk C."/>
            <person name="Smith L.A."/>
            <person name="Smith T.J."/>
            <person name="Sutton G."/>
            <person name="Brettin T.S."/>
        </authorList>
    </citation>
    <scope>NUCLEOTIDE SEQUENCE [LARGE SCALE GENOMIC DNA]</scope>
    <source>
        <strain>Alaska E43 / Type E3</strain>
    </source>
</reference>